<feature type="chain" id="PRO_1000215764" description="Pyridoxine/pyridoxamine 5'-phosphate oxidase">
    <location>
        <begin position="1"/>
        <end position="215"/>
    </location>
</feature>
<feature type="binding site" evidence="1">
    <location>
        <begin position="9"/>
        <end position="12"/>
    </location>
    <ligand>
        <name>substrate</name>
    </ligand>
</feature>
<feature type="binding site" evidence="1">
    <location>
        <begin position="64"/>
        <end position="69"/>
    </location>
    <ligand>
        <name>FMN</name>
        <dbReference type="ChEBI" id="CHEBI:58210"/>
    </ligand>
</feature>
<feature type="binding site" evidence="1">
    <location>
        <position position="69"/>
    </location>
    <ligand>
        <name>substrate</name>
    </ligand>
</feature>
<feature type="binding site" evidence="1">
    <location>
        <begin position="79"/>
        <end position="80"/>
    </location>
    <ligand>
        <name>FMN</name>
        <dbReference type="ChEBI" id="CHEBI:58210"/>
    </ligand>
</feature>
<feature type="binding site" evidence="1">
    <location>
        <position position="86"/>
    </location>
    <ligand>
        <name>FMN</name>
        <dbReference type="ChEBI" id="CHEBI:58210"/>
    </ligand>
</feature>
<feature type="binding site" evidence="1">
    <location>
        <position position="108"/>
    </location>
    <ligand>
        <name>FMN</name>
        <dbReference type="ChEBI" id="CHEBI:58210"/>
    </ligand>
</feature>
<feature type="binding site" evidence="1">
    <location>
        <position position="126"/>
    </location>
    <ligand>
        <name>substrate</name>
    </ligand>
</feature>
<feature type="binding site" evidence="1">
    <location>
        <position position="130"/>
    </location>
    <ligand>
        <name>substrate</name>
    </ligand>
</feature>
<feature type="binding site" evidence="1">
    <location>
        <position position="134"/>
    </location>
    <ligand>
        <name>substrate</name>
    </ligand>
</feature>
<feature type="binding site" evidence="1">
    <location>
        <begin position="143"/>
        <end position="144"/>
    </location>
    <ligand>
        <name>FMN</name>
        <dbReference type="ChEBI" id="CHEBI:58210"/>
    </ligand>
</feature>
<feature type="binding site" evidence="1">
    <location>
        <position position="188"/>
    </location>
    <ligand>
        <name>FMN</name>
        <dbReference type="ChEBI" id="CHEBI:58210"/>
    </ligand>
</feature>
<feature type="binding site" evidence="1">
    <location>
        <begin position="194"/>
        <end position="196"/>
    </location>
    <ligand>
        <name>substrate</name>
    </ligand>
</feature>
<feature type="binding site" evidence="1">
    <location>
        <position position="198"/>
    </location>
    <ligand>
        <name>FMN</name>
        <dbReference type="ChEBI" id="CHEBI:58210"/>
    </ligand>
</feature>
<organism>
    <name type="scientific">Pseudomonas fluorescens (strain SBW25)</name>
    <dbReference type="NCBI Taxonomy" id="216595"/>
    <lineage>
        <taxon>Bacteria</taxon>
        <taxon>Pseudomonadati</taxon>
        <taxon>Pseudomonadota</taxon>
        <taxon>Gammaproteobacteria</taxon>
        <taxon>Pseudomonadales</taxon>
        <taxon>Pseudomonadaceae</taxon>
        <taxon>Pseudomonas</taxon>
    </lineage>
</organism>
<gene>
    <name evidence="1" type="primary">pdxH</name>
    <name type="ordered locus">PFLU_1328</name>
</gene>
<keyword id="KW-0285">Flavoprotein</keyword>
<keyword id="KW-0288">FMN</keyword>
<keyword id="KW-0560">Oxidoreductase</keyword>
<keyword id="KW-0664">Pyridoxine biosynthesis</keyword>
<sequence>MTQALADMRRDYTRDGLSEAQAPDEPFALFHQWFADAVKTEQPPVEANAMTLATVDQDGRPHCRILLLKGLDAQGFTFFTNYQSAKGQQLAARPFAAMTFFWPTLERQVRIEGRVVKVTPEESDAYYQVRPLGSRLGAWASPQSQVIRDREELQDLLKATEQRFSDTQPDCPEHWGGYRLLPERIEFWQGRASRLHDRLNYRLQDSQWTRERLAP</sequence>
<name>PDXH_PSEFS</name>
<accession>C3K863</accession>
<protein>
    <recommendedName>
        <fullName evidence="1">Pyridoxine/pyridoxamine 5'-phosphate oxidase</fullName>
        <ecNumber evidence="1">1.4.3.5</ecNumber>
    </recommendedName>
    <alternativeName>
        <fullName evidence="1">PNP/PMP oxidase</fullName>
        <shortName evidence="1">PNPOx</shortName>
    </alternativeName>
    <alternativeName>
        <fullName evidence="1">Pyridoxal 5'-phosphate synthase</fullName>
    </alternativeName>
</protein>
<proteinExistence type="inferred from homology"/>
<reference key="1">
    <citation type="journal article" date="2009" name="Genome Biol.">
        <title>Genomic and genetic analyses of diversity and plant interactions of Pseudomonas fluorescens.</title>
        <authorList>
            <person name="Silby M.W."/>
            <person name="Cerdeno-Tarraga A.M."/>
            <person name="Vernikos G.S."/>
            <person name="Giddens S.R."/>
            <person name="Jackson R.W."/>
            <person name="Preston G.M."/>
            <person name="Zhang X.-X."/>
            <person name="Moon C.D."/>
            <person name="Gehrig S.M."/>
            <person name="Godfrey S.A.C."/>
            <person name="Knight C.G."/>
            <person name="Malone J.G."/>
            <person name="Robinson Z."/>
            <person name="Spiers A.J."/>
            <person name="Harris S."/>
            <person name="Challis G.L."/>
            <person name="Yaxley A.M."/>
            <person name="Harris D."/>
            <person name="Seeger K."/>
            <person name="Murphy L."/>
            <person name="Rutter S."/>
            <person name="Squares R."/>
            <person name="Quail M.A."/>
            <person name="Saunders E."/>
            <person name="Mavromatis K."/>
            <person name="Brettin T.S."/>
            <person name="Bentley S.D."/>
            <person name="Hothersall J."/>
            <person name="Stephens E."/>
            <person name="Thomas C.M."/>
            <person name="Parkhill J."/>
            <person name="Levy S.B."/>
            <person name="Rainey P.B."/>
            <person name="Thomson N.R."/>
        </authorList>
    </citation>
    <scope>NUCLEOTIDE SEQUENCE [LARGE SCALE GENOMIC DNA]</scope>
    <source>
        <strain>SBW25</strain>
    </source>
</reference>
<dbReference type="EC" id="1.4.3.5" evidence="1"/>
<dbReference type="EMBL" id="AM181176">
    <property type="protein sequence ID" value="CAY47583.1"/>
    <property type="molecule type" value="Genomic_DNA"/>
</dbReference>
<dbReference type="RefSeq" id="WP_012722640.1">
    <property type="nucleotide sequence ID" value="NC_012660.1"/>
</dbReference>
<dbReference type="SMR" id="C3K863"/>
<dbReference type="STRING" id="294.SRM1_01244"/>
<dbReference type="GeneID" id="93462945"/>
<dbReference type="PATRIC" id="fig|216595.4.peg.1559"/>
<dbReference type="eggNOG" id="COG0259">
    <property type="taxonomic scope" value="Bacteria"/>
</dbReference>
<dbReference type="HOGENOM" id="CLU_032263_2_2_6"/>
<dbReference type="OrthoDB" id="9780392at2"/>
<dbReference type="UniPathway" id="UPA01068">
    <property type="reaction ID" value="UER00304"/>
</dbReference>
<dbReference type="UniPathway" id="UPA01068">
    <property type="reaction ID" value="UER00305"/>
</dbReference>
<dbReference type="GO" id="GO:0010181">
    <property type="term" value="F:FMN binding"/>
    <property type="evidence" value="ECO:0007669"/>
    <property type="project" value="UniProtKB-UniRule"/>
</dbReference>
<dbReference type="GO" id="GO:0004733">
    <property type="term" value="F:pyridoxamine phosphate oxidase activity"/>
    <property type="evidence" value="ECO:0007669"/>
    <property type="project" value="UniProtKB-UniRule"/>
</dbReference>
<dbReference type="GO" id="GO:0008615">
    <property type="term" value="P:pyridoxine biosynthetic process"/>
    <property type="evidence" value="ECO:0007669"/>
    <property type="project" value="UniProtKB-KW"/>
</dbReference>
<dbReference type="FunFam" id="2.30.110.10:FF:000020">
    <property type="entry name" value="PNPO isoform 11"/>
    <property type="match status" value="1"/>
</dbReference>
<dbReference type="Gene3D" id="2.30.110.10">
    <property type="entry name" value="Electron Transport, Fmn-binding Protein, Chain A"/>
    <property type="match status" value="1"/>
</dbReference>
<dbReference type="HAMAP" id="MF_01629">
    <property type="entry name" value="PdxH"/>
    <property type="match status" value="1"/>
</dbReference>
<dbReference type="InterPro" id="IPR000659">
    <property type="entry name" value="Pyridox_Oxase"/>
</dbReference>
<dbReference type="InterPro" id="IPR019740">
    <property type="entry name" value="Pyridox_Oxase_CS"/>
</dbReference>
<dbReference type="InterPro" id="IPR011576">
    <property type="entry name" value="Pyridox_Oxase_N"/>
</dbReference>
<dbReference type="InterPro" id="IPR019576">
    <property type="entry name" value="Pyridoxamine_oxidase_dimer_C"/>
</dbReference>
<dbReference type="InterPro" id="IPR012349">
    <property type="entry name" value="Split_barrel_FMN-bd"/>
</dbReference>
<dbReference type="NCBIfam" id="TIGR00558">
    <property type="entry name" value="pdxH"/>
    <property type="match status" value="1"/>
</dbReference>
<dbReference type="NCBIfam" id="NF004231">
    <property type="entry name" value="PRK05679.1"/>
    <property type="match status" value="1"/>
</dbReference>
<dbReference type="PANTHER" id="PTHR10851:SF0">
    <property type="entry name" value="PYRIDOXINE-5'-PHOSPHATE OXIDASE"/>
    <property type="match status" value="1"/>
</dbReference>
<dbReference type="PANTHER" id="PTHR10851">
    <property type="entry name" value="PYRIDOXINE-5-PHOSPHATE OXIDASE"/>
    <property type="match status" value="1"/>
</dbReference>
<dbReference type="Pfam" id="PF10590">
    <property type="entry name" value="PNP_phzG_C"/>
    <property type="match status" value="1"/>
</dbReference>
<dbReference type="Pfam" id="PF01243">
    <property type="entry name" value="PNPOx_N"/>
    <property type="match status" value="1"/>
</dbReference>
<dbReference type="PIRSF" id="PIRSF000190">
    <property type="entry name" value="Pyd_amn-ph_oxd"/>
    <property type="match status" value="1"/>
</dbReference>
<dbReference type="SUPFAM" id="SSF50475">
    <property type="entry name" value="FMN-binding split barrel"/>
    <property type="match status" value="1"/>
</dbReference>
<dbReference type="PROSITE" id="PS01064">
    <property type="entry name" value="PYRIDOX_OXIDASE"/>
    <property type="match status" value="1"/>
</dbReference>
<evidence type="ECO:0000255" key="1">
    <source>
        <dbReference type="HAMAP-Rule" id="MF_01629"/>
    </source>
</evidence>
<comment type="function">
    <text evidence="1">Catalyzes the oxidation of either pyridoxine 5'-phosphate (PNP) or pyridoxamine 5'-phosphate (PMP) into pyridoxal 5'-phosphate (PLP).</text>
</comment>
<comment type="catalytic activity">
    <reaction evidence="1">
        <text>pyridoxamine 5'-phosphate + O2 + H2O = pyridoxal 5'-phosphate + H2O2 + NH4(+)</text>
        <dbReference type="Rhea" id="RHEA:15817"/>
        <dbReference type="ChEBI" id="CHEBI:15377"/>
        <dbReference type="ChEBI" id="CHEBI:15379"/>
        <dbReference type="ChEBI" id="CHEBI:16240"/>
        <dbReference type="ChEBI" id="CHEBI:28938"/>
        <dbReference type="ChEBI" id="CHEBI:58451"/>
        <dbReference type="ChEBI" id="CHEBI:597326"/>
        <dbReference type="EC" id="1.4.3.5"/>
    </reaction>
</comment>
<comment type="catalytic activity">
    <reaction evidence="1">
        <text>pyridoxine 5'-phosphate + O2 = pyridoxal 5'-phosphate + H2O2</text>
        <dbReference type="Rhea" id="RHEA:15149"/>
        <dbReference type="ChEBI" id="CHEBI:15379"/>
        <dbReference type="ChEBI" id="CHEBI:16240"/>
        <dbReference type="ChEBI" id="CHEBI:58589"/>
        <dbReference type="ChEBI" id="CHEBI:597326"/>
        <dbReference type="EC" id="1.4.3.5"/>
    </reaction>
</comment>
<comment type="cofactor">
    <cofactor evidence="1">
        <name>FMN</name>
        <dbReference type="ChEBI" id="CHEBI:58210"/>
    </cofactor>
    <text evidence="1">Binds 1 FMN per subunit.</text>
</comment>
<comment type="pathway">
    <text evidence="1">Cofactor metabolism; pyridoxal 5'-phosphate salvage; pyridoxal 5'-phosphate from pyridoxamine 5'-phosphate: step 1/1.</text>
</comment>
<comment type="pathway">
    <text evidence="1">Cofactor metabolism; pyridoxal 5'-phosphate salvage; pyridoxal 5'-phosphate from pyridoxine 5'-phosphate: step 1/1.</text>
</comment>
<comment type="subunit">
    <text evidence="1">Homodimer.</text>
</comment>
<comment type="similarity">
    <text evidence="1">Belongs to the pyridoxamine 5'-phosphate oxidase family.</text>
</comment>